<evidence type="ECO:0000255" key="1">
    <source>
        <dbReference type="HAMAP-Rule" id="MF_00259"/>
    </source>
</evidence>
<name>GCST_PROMH</name>
<accession>B4F0N9</accession>
<keyword id="KW-0032">Aminotransferase</keyword>
<keyword id="KW-1185">Reference proteome</keyword>
<keyword id="KW-0808">Transferase</keyword>
<comment type="function">
    <text evidence="1">The glycine cleavage system catalyzes the degradation of glycine.</text>
</comment>
<comment type="catalytic activity">
    <reaction evidence="1">
        <text>N(6)-[(R)-S(8)-aminomethyldihydrolipoyl]-L-lysyl-[protein] + (6S)-5,6,7,8-tetrahydrofolate = N(6)-[(R)-dihydrolipoyl]-L-lysyl-[protein] + (6R)-5,10-methylene-5,6,7,8-tetrahydrofolate + NH4(+)</text>
        <dbReference type="Rhea" id="RHEA:16945"/>
        <dbReference type="Rhea" id="RHEA-COMP:10475"/>
        <dbReference type="Rhea" id="RHEA-COMP:10492"/>
        <dbReference type="ChEBI" id="CHEBI:15636"/>
        <dbReference type="ChEBI" id="CHEBI:28938"/>
        <dbReference type="ChEBI" id="CHEBI:57453"/>
        <dbReference type="ChEBI" id="CHEBI:83100"/>
        <dbReference type="ChEBI" id="CHEBI:83143"/>
        <dbReference type="EC" id="2.1.2.10"/>
    </reaction>
</comment>
<comment type="subunit">
    <text evidence="1">The glycine cleavage system is composed of four proteins: P, T, L and H.</text>
</comment>
<comment type="similarity">
    <text evidence="1">Belongs to the GcvT family.</text>
</comment>
<protein>
    <recommendedName>
        <fullName evidence="1">Aminomethyltransferase</fullName>
        <ecNumber evidence="1">2.1.2.10</ecNumber>
    </recommendedName>
    <alternativeName>
        <fullName evidence="1">Glycine cleavage system T protein</fullName>
    </alternativeName>
</protein>
<sequence length="364" mass="40390">MAKQTPLYDEHVACGARMVDFHGWMMPLHYGSQIDEHHNVRQDAGMFDVSHMTIVDLHGPQVKDFLRYLLANDVAKLTEKGKALYTGMLNASGGVIDDLIVYYFDETFYRLVVNSATREKDLAWITEHAKDYVVDIQVRDDLALIAVQGPHAQEKVQRLLSESHRQIVAAMKPFYGVQLDDLFVATTGYTGEAGYEIAMPKEQAVDYWKKLLAVGVKPAGLGARDTLRLEAGMDLYGQEMDETINPLEANMGWTIAWLPEDRQFIGREALEKLRATGTDKLVGLVMREKGVLRAGSAVHFTDDLGELREGVITSGTFSPTLGFSIALARVPAGIKDSAIVLLRNREIPVEVVKPGFVRSGKALV</sequence>
<gene>
    <name evidence="1" type="primary">gcvT</name>
    <name type="ordered locus">PMI2021</name>
</gene>
<feature type="chain" id="PRO_1000114104" description="Aminomethyltransferase">
    <location>
        <begin position="1"/>
        <end position="364"/>
    </location>
</feature>
<proteinExistence type="inferred from homology"/>
<dbReference type="EC" id="2.1.2.10" evidence="1"/>
<dbReference type="EMBL" id="AM942759">
    <property type="protein sequence ID" value="CAR44066.1"/>
    <property type="molecule type" value="Genomic_DNA"/>
</dbReference>
<dbReference type="RefSeq" id="WP_012368218.1">
    <property type="nucleotide sequence ID" value="NC_010554.1"/>
</dbReference>
<dbReference type="SMR" id="B4F0N9"/>
<dbReference type="EnsemblBacteria" id="CAR44066">
    <property type="protein sequence ID" value="CAR44066"/>
    <property type="gene ID" value="PMI2021"/>
</dbReference>
<dbReference type="GeneID" id="6800659"/>
<dbReference type="KEGG" id="pmr:PMI2021"/>
<dbReference type="eggNOG" id="COG0404">
    <property type="taxonomic scope" value="Bacteria"/>
</dbReference>
<dbReference type="HOGENOM" id="CLU_007884_10_2_6"/>
<dbReference type="Proteomes" id="UP000008319">
    <property type="component" value="Chromosome"/>
</dbReference>
<dbReference type="GO" id="GO:0005829">
    <property type="term" value="C:cytosol"/>
    <property type="evidence" value="ECO:0007669"/>
    <property type="project" value="TreeGrafter"/>
</dbReference>
<dbReference type="GO" id="GO:0005960">
    <property type="term" value="C:glycine cleavage complex"/>
    <property type="evidence" value="ECO:0007669"/>
    <property type="project" value="InterPro"/>
</dbReference>
<dbReference type="GO" id="GO:0004047">
    <property type="term" value="F:aminomethyltransferase activity"/>
    <property type="evidence" value="ECO:0007669"/>
    <property type="project" value="UniProtKB-UniRule"/>
</dbReference>
<dbReference type="GO" id="GO:0008483">
    <property type="term" value="F:transaminase activity"/>
    <property type="evidence" value="ECO:0007669"/>
    <property type="project" value="UniProtKB-KW"/>
</dbReference>
<dbReference type="GO" id="GO:0019464">
    <property type="term" value="P:glycine decarboxylation via glycine cleavage system"/>
    <property type="evidence" value="ECO:0007669"/>
    <property type="project" value="UniProtKB-UniRule"/>
</dbReference>
<dbReference type="FunFam" id="2.40.30.110:FF:000001">
    <property type="entry name" value="Aminomethyltransferase"/>
    <property type="match status" value="1"/>
</dbReference>
<dbReference type="FunFam" id="3.30.70.1400:FF:000001">
    <property type="entry name" value="Aminomethyltransferase"/>
    <property type="match status" value="1"/>
</dbReference>
<dbReference type="FunFam" id="4.10.1250.10:FF:000001">
    <property type="entry name" value="Aminomethyltransferase"/>
    <property type="match status" value="1"/>
</dbReference>
<dbReference type="Gene3D" id="2.40.30.110">
    <property type="entry name" value="Aminomethyltransferase beta-barrel domains"/>
    <property type="match status" value="1"/>
</dbReference>
<dbReference type="Gene3D" id="3.30.70.1400">
    <property type="entry name" value="Aminomethyltransferase beta-barrel domains"/>
    <property type="match status" value="1"/>
</dbReference>
<dbReference type="Gene3D" id="4.10.1250.10">
    <property type="entry name" value="Aminomethyltransferase fragment"/>
    <property type="match status" value="1"/>
</dbReference>
<dbReference type="Gene3D" id="3.30.1360.120">
    <property type="entry name" value="Probable tRNA modification gtpase trme, domain 1"/>
    <property type="match status" value="1"/>
</dbReference>
<dbReference type="HAMAP" id="MF_00259">
    <property type="entry name" value="GcvT"/>
    <property type="match status" value="1"/>
</dbReference>
<dbReference type="InterPro" id="IPR006223">
    <property type="entry name" value="GCS_T"/>
</dbReference>
<dbReference type="InterPro" id="IPR022903">
    <property type="entry name" value="GCS_T_bac"/>
</dbReference>
<dbReference type="InterPro" id="IPR013977">
    <property type="entry name" value="GCST_C"/>
</dbReference>
<dbReference type="InterPro" id="IPR006222">
    <property type="entry name" value="GCV_T_N"/>
</dbReference>
<dbReference type="InterPro" id="IPR028896">
    <property type="entry name" value="GcvT/YgfZ/DmdA"/>
</dbReference>
<dbReference type="InterPro" id="IPR029043">
    <property type="entry name" value="GcvT/YgfZ_C"/>
</dbReference>
<dbReference type="InterPro" id="IPR027266">
    <property type="entry name" value="TrmE/GcvT_dom1"/>
</dbReference>
<dbReference type="NCBIfam" id="TIGR00528">
    <property type="entry name" value="gcvT"/>
    <property type="match status" value="1"/>
</dbReference>
<dbReference type="NCBIfam" id="NF001567">
    <property type="entry name" value="PRK00389.1"/>
    <property type="match status" value="1"/>
</dbReference>
<dbReference type="PANTHER" id="PTHR43757">
    <property type="entry name" value="AMINOMETHYLTRANSFERASE"/>
    <property type="match status" value="1"/>
</dbReference>
<dbReference type="PANTHER" id="PTHR43757:SF2">
    <property type="entry name" value="AMINOMETHYLTRANSFERASE, MITOCHONDRIAL"/>
    <property type="match status" value="1"/>
</dbReference>
<dbReference type="Pfam" id="PF01571">
    <property type="entry name" value="GCV_T"/>
    <property type="match status" value="1"/>
</dbReference>
<dbReference type="Pfam" id="PF08669">
    <property type="entry name" value="GCV_T_C"/>
    <property type="match status" value="1"/>
</dbReference>
<dbReference type="PIRSF" id="PIRSF006487">
    <property type="entry name" value="GcvT"/>
    <property type="match status" value="1"/>
</dbReference>
<dbReference type="SUPFAM" id="SSF101790">
    <property type="entry name" value="Aminomethyltransferase beta-barrel domain"/>
    <property type="match status" value="1"/>
</dbReference>
<dbReference type="SUPFAM" id="SSF103025">
    <property type="entry name" value="Folate-binding domain"/>
    <property type="match status" value="1"/>
</dbReference>
<reference key="1">
    <citation type="journal article" date="2008" name="J. Bacteriol.">
        <title>Complete genome sequence of uropathogenic Proteus mirabilis, a master of both adherence and motility.</title>
        <authorList>
            <person name="Pearson M.M."/>
            <person name="Sebaihia M."/>
            <person name="Churcher C."/>
            <person name="Quail M.A."/>
            <person name="Seshasayee A.S."/>
            <person name="Luscombe N.M."/>
            <person name="Abdellah Z."/>
            <person name="Arrosmith C."/>
            <person name="Atkin B."/>
            <person name="Chillingworth T."/>
            <person name="Hauser H."/>
            <person name="Jagels K."/>
            <person name="Moule S."/>
            <person name="Mungall K."/>
            <person name="Norbertczak H."/>
            <person name="Rabbinowitsch E."/>
            <person name="Walker D."/>
            <person name="Whithead S."/>
            <person name="Thomson N.R."/>
            <person name="Rather P.N."/>
            <person name="Parkhill J."/>
            <person name="Mobley H.L.T."/>
        </authorList>
    </citation>
    <scope>NUCLEOTIDE SEQUENCE [LARGE SCALE GENOMIC DNA]</scope>
    <source>
        <strain>HI4320</strain>
    </source>
</reference>
<organism>
    <name type="scientific">Proteus mirabilis (strain HI4320)</name>
    <dbReference type="NCBI Taxonomy" id="529507"/>
    <lineage>
        <taxon>Bacteria</taxon>
        <taxon>Pseudomonadati</taxon>
        <taxon>Pseudomonadota</taxon>
        <taxon>Gammaproteobacteria</taxon>
        <taxon>Enterobacterales</taxon>
        <taxon>Morganellaceae</taxon>
        <taxon>Proteus</taxon>
    </lineage>
</organism>